<evidence type="ECO:0000255" key="1">
    <source>
        <dbReference type="HAMAP-Rule" id="MF_00031"/>
    </source>
</evidence>
<gene>
    <name evidence="1" type="primary">ruvA</name>
    <name type="ordered locus">R02750</name>
    <name type="ORF">SMc03966</name>
</gene>
<sequence>MIGKLKGTIDEIGEDHVVLDVHGVGYVAHCSARTLGKLGSAGEAAVLFIETYVREDQLKLFGFLSALEREWFRLLQSVQGVGSKVALAVLSTLTPGELANAIALQDKTSISRAPGVGPKVAVRIVTELKNKAPAFSGEMAPSIGLKQELGEGVAAAPVADAVSALTNLGYSRDQAANAVAAALKNGGEGGDSAKLIRLGLKELSR</sequence>
<keyword id="KW-0963">Cytoplasm</keyword>
<keyword id="KW-0227">DNA damage</keyword>
<keyword id="KW-0233">DNA recombination</keyword>
<keyword id="KW-0234">DNA repair</keyword>
<keyword id="KW-0238">DNA-binding</keyword>
<keyword id="KW-1185">Reference proteome</keyword>
<feature type="chain" id="PRO_0000094671" description="Holliday junction branch migration complex subunit RuvA">
    <location>
        <begin position="1"/>
        <end position="205"/>
    </location>
</feature>
<feature type="region of interest" description="Domain I" evidence="1">
    <location>
        <begin position="1"/>
        <end position="64"/>
    </location>
</feature>
<feature type="region of interest" description="Domain II" evidence="1">
    <location>
        <begin position="65"/>
        <end position="143"/>
    </location>
</feature>
<feature type="region of interest" description="Flexible linker" evidence="1">
    <location>
        <begin position="144"/>
        <end position="153"/>
    </location>
</feature>
<feature type="region of interest" description="Domain III" evidence="1">
    <location>
        <begin position="153"/>
        <end position="205"/>
    </location>
</feature>
<reference key="1">
    <citation type="journal article" date="2001" name="Proc. Natl. Acad. Sci. U.S.A.">
        <title>Analysis of the chromosome sequence of the legume symbiont Sinorhizobium meliloti strain 1021.</title>
        <authorList>
            <person name="Capela D."/>
            <person name="Barloy-Hubler F."/>
            <person name="Gouzy J."/>
            <person name="Bothe G."/>
            <person name="Ampe F."/>
            <person name="Batut J."/>
            <person name="Boistard P."/>
            <person name="Becker A."/>
            <person name="Boutry M."/>
            <person name="Cadieu E."/>
            <person name="Dreano S."/>
            <person name="Gloux S."/>
            <person name="Godrie T."/>
            <person name="Goffeau A."/>
            <person name="Kahn D."/>
            <person name="Kiss E."/>
            <person name="Lelaure V."/>
            <person name="Masuy D."/>
            <person name="Pohl T."/>
            <person name="Portetelle D."/>
            <person name="Puehler A."/>
            <person name="Purnelle B."/>
            <person name="Ramsperger U."/>
            <person name="Renard C."/>
            <person name="Thebault P."/>
            <person name="Vandenbol M."/>
            <person name="Weidner S."/>
            <person name="Galibert F."/>
        </authorList>
    </citation>
    <scope>NUCLEOTIDE SEQUENCE [LARGE SCALE GENOMIC DNA]</scope>
    <source>
        <strain>1021</strain>
    </source>
</reference>
<reference key="2">
    <citation type="journal article" date="2001" name="Science">
        <title>The composite genome of the legume symbiont Sinorhizobium meliloti.</title>
        <authorList>
            <person name="Galibert F."/>
            <person name="Finan T.M."/>
            <person name="Long S.R."/>
            <person name="Puehler A."/>
            <person name="Abola P."/>
            <person name="Ampe F."/>
            <person name="Barloy-Hubler F."/>
            <person name="Barnett M.J."/>
            <person name="Becker A."/>
            <person name="Boistard P."/>
            <person name="Bothe G."/>
            <person name="Boutry M."/>
            <person name="Bowser L."/>
            <person name="Buhrmester J."/>
            <person name="Cadieu E."/>
            <person name="Capela D."/>
            <person name="Chain P."/>
            <person name="Cowie A."/>
            <person name="Davis R.W."/>
            <person name="Dreano S."/>
            <person name="Federspiel N.A."/>
            <person name="Fisher R.F."/>
            <person name="Gloux S."/>
            <person name="Godrie T."/>
            <person name="Goffeau A."/>
            <person name="Golding B."/>
            <person name="Gouzy J."/>
            <person name="Gurjal M."/>
            <person name="Hernandez-Lucas I."/>
            <person name="Hong A."/>
            <person name="Huizar L."/>
            <person name="Hyman R.W."/>
            <person name="Jones T."/>
            <person name="Kahn D."/>
            <person name="Kahn M.L."/>
            <person name="Kalman S."/>
            <person name="Keating D.H."/>
            <person name="Kiss E."/>
            <person name="Komp C."/>
            <person name="Lelaure V."/>
            <person name="Masuy D."/>
            <person name="Palm C."/>
            <person name="Peck M.C."/>
            <person name="Pohl T.M."/>
            <person name="Portetelle D."/>
            <person name="Purnelle B."/>
            <person name="Ramsperger U."/>
            <person name="Surzycki R."/>
            <person name="Thebault P."/>
            <person name="Vandenbol M."/>
            <person name="Vorhoelter F.J."/>
            <person name="Weidner S."/>
            <person name="Wells D.H."/>
            <person name="Wong K."/>
            <person name="Yeh K.-C."/>
            <person name="Batut J."/>
        </authorList>
    </citation>
    <scope>NUCLEOTIDE SEQUENCE [LARGE SCALE GENOMIC DNA]</scope>
    <source>
        <strain>1021</strain>
    </source>
</reference>
<dbReference type="EMBL" id="AL591688">
    <property type="protein sequence ID" value="CAC47329.1"/>
    <property type="molecule type" value="Genomic_DNA"/>
</dbReference>
<dbReference type="RefSeq" id="NP_386856.1">
    <property type="nucleotide sequence ID" value="NC_003047.1"/>
</dbReference>
<dbReference type="RefSeq" id="WP_010970169.1">
    <property type="nucleotide sequence ID" value="NC_003047.1"/>
</dbReference>
<dbReference type="SMR" id="Q92M91"/>
<dbReference type="EnsemblBacteria" id="CAC47329">
    <property type="protein sequence ID" value="CAC47329"/>
    <property type="gene ID" value="SMc03966"/>
</dbReference>
<dbReference type="KEGG" id="sme:SMc03966"/>
<dbReference type="PATRIC" id="fig|266834.11.peg.4259"/>
<dbReference type="eggNOG" id="COG0632">
    <property type="taxonomic scope" value="Bacteria"/>
</dbReference>
<dbReference type="HOGENOM" id="CLU_087936_3_0_5"/>
<dbReference type="OrthoDB" id="5293449at2"/>
<dbReference type="Proteomes" id="UP000001976">
    <property type="component" value="Chromosome"/>
</dbReference>
<dbReference type="GO" id="GO:0005737">
    <property type="term" value="C:cytoplasm"/>
    <property type="evidence" value="ECO:0007669"/>
    <property type="project" value="UniProtKB-SubCell"/>
</dbReference>
<dbReference type="GO" id="GO:0009379">
    <property type="term" value="C:Holliday junction helicase complex"/>
    <property type="evidence" value="ECO:0007669"/>
    <property type="project" value="InterPro"/>
</dbReference>
<dbReference type="GO" id="GO:0048476">
    <property type="term" value="C:Holliday junction resolvase complex"/>
    <property type="evidence" value="ECO:0007669"/>
    <property type="project" value="UniProtKB-UniRule"/>
</dbReference>
<dbReference type="GO" id="GO:0005524">
    <property type="term" value="F:ATP binding"/>
    <property type="evidence" value="ECO:0007669"/>
    <property type="project" value="InterPro"/>
</dbReference>
<dbReference type="GO" id="GO:0000400">
    <property type="term" value="F:four-way junction DNA binding"/>
    <property type="evidence" value="ECO:0007669"/>
    <property type="project" value="UniProtKB-UniRule"/>
</dbReference>
<dbReference type="GO" id="GO:0009378">
    <property type="term" value="F:four-way junction helicase activity"/>
    <property type="evidence" value="ECO:0007669"/>
    <property type="project" value="InterPro"/>
</dbReference>
<dbReference type="GO" id="GO:0006310">
    <property type="term" value="P:DNA recombination"/>
    <property type="evidence" value="ECO:0007669"/>
    <property type="project" value="UniProtKB-UniRule"/>
</dbReference>
<dbReference type="GO" id="GO:0006281">
    <property type="term" value="P:DNA repair"/>
    <property type="evidence" value="ECO:0007669"/>
    <property type="project" value="UniProtKB-UniRule"/>
</dbReference>
<dbReference type="Gene3D" id="1.10.150.20">
    <property type="entry name" value="5' to 3' exonuclease, C-terminal subdomain"/>
    <property type="match status" value="1"/>
</dbReference>
<dbReference type="Gene3D" id="1.10.8.10">
    <property type="entry name" value="DNA helicase RuvA subunit, C-terminal domain"/>
    <property type="match status" value="1"/>
</dbReference>
<dbReference type="Gene3D" id="2.40.50.140">
    <property type="entry name" value="Nucleic acid-binding proteins"/>
    <property type="match status" value="1"/>
</dbReference>
<dbReference type="HAMAP" id="MF_00031">
    <property type="entry name" value="DNA_HJ_migration_RuvA"/>
    <property type="match status" value="1"/>
</dbReference>
<dbReference type="InterPro" id="IPR013849">
    <property type="entry name" value="DNA_helicase_Holl-junc_RuvA_I"/>
</dbReference>
<dbReference type="InterPro" id="IPR012340">
    <property type="entry name" value="NA-bd_OB-fold"/>
</dbReference>
<dbReference type="InterPro" id="IPR000085">
    <property type="entry name" value="RuvA"/>
</dbReference>
<dbReference type="InterPro" id="IPR010994">
    <property type="entry name" value="RuvA_2-like"/>
</dbReference>
<dbReference type="InterPro" id="IPR011114">
    <property type="entry name" value="RuvA_C"/>
</dbReference>
<dbReference type="InterPro" id="IPR036267">
    <property type="entry name" value="RuvA_C_sf"/>
</dbReference>
<dbReference type="NCBIfam" id="TIGR00084">
    <property type="entry name" value="ruvA"/>
    <property type="match status" value="1"/>
</dbReference>
<dbReference type="Pfam" id="PF14520">
    <property type="entry name" value="HHH_5"/>
    <property type="match status" value="1"/>
</dbReference>
<dbReference type="Pfam" id="PF07499">
    <property type="entry name" value="RuvA_C"/>
    <property type="match status" value="1"/>
</dbReference>
<dbReference type="Pfam" id="PF01330">
    <property type="entry name" value="RuvA_N"/>
    <property type="match status" value="1"/>
</dbReference>
<dbReference type="SUPFAM" id="SSF46929">
    <property type="entry name" value="DNA helicase RuvA subunit, C-terminal domain"/>
    <property type="match status" value="1"/>
</dbReference>
<dbReference type="SUPFAM" id="SSF50249">
    <property type="entry name" value="Nucleic acid-binding proteins"/>
    <property type="match status" value="1"/>
</dbReference>
<dbReference type="SUPFAM" id="SSF47781">
    <property type="entry name" value="RuvA domain 2-like"/>
    <property type="match status" value="1"/>
</dbReference>
<protein>
    <recommendedName>
        <fullName evidence="1">Holliday junction branch migration complex subunit RuvA</fullName>
    </recommendedName>
</protein>
<proteinExistence type="inferred from homology"/>
<organism>
    <name type="scientific">Rhizobium meliloti (strain 1021)</name>
    <name type="common">Ensifer meliloti</name>
    <name type="synonym">Sinorhizobium meliloti</name>
    <dbReference type="NCBI Taxonomy" id="266834"/>
    <lineage>
        <taxon>Bacteria</taxon>
        <taxon>Pseudomonadati</taxon>
        <taxon>Pseudomonadota</taxon>
        <taxon>Alphaproteobacteria</taxon>
        <taxon>Hyphomicrobiales</taxon>
        <taxon>Rhizobiaceae</taxon>
        <taxon>Sinorhizobium/Ensifer group</taxon>
        <taxon>Sinorhizobium</taxon>
    </lineage>
</organism>
<comment type="function">
    <text evidence="1">The RuvA-RuvB-RuvC complex processes Holliday junction (HJ) DNA during genetic recombination and DNA repair, while the RuvA-RuvB complex plays an important role in the rescue of blocked DNA replication forks via replication fork reversal (RFR). RuvA specifically binds to HJ cruciform DNA, conferring on it an open structure. The RuvB hexamer acts as an ATP-dependent pump, pulling dsDNA into and through the RuvAB complex. HJ branch migration allows RuvC to scan DNA until it finds its consensus sequence, where it cleaves and resolves the cruciform DNA.</text>
</comment>
<comment type="subunit">
    <text evidence="1">Homotetramer. Forms an RuvA(8)-RuvB(12)-Holliday junction (HJ) complex. HJ DNA is sandwiched between 2 RuvA tetramers; dsDNA enters through RuvA and exits via RuvB. An RuvB hexamer assembles on each DNA strand where it exits the tetramer. Each RuvB hexamer is contacted by two RuvA subunits (via domain III) on 2 adjacent RuvB subunits; this complex drives branch migration. In the full resolvosome a probable DNA-RuvA(4)-RuvB(12)-RuvC(2) complex forms which resolves the HJ.</text>
</comment>
<comment type="subcellular location">
    <subcellularLocation>
        <location evidence="1">Cytoplasm</location>
    </subcellularLocation>
</comment>
<comment type="domain">
    <text evidence="1">Has three domains with a flexible linker between the domains II and III and assumes an 'L' shape. Domain III is highly mobile and contacts RuvB.</text>
</comment>
<comment type="similarity">
    <text evidence="1">Belongs to the RuvA family.</text>
</comment>
<name>RUVA_RHIME</name>
<accession>Q92M91</accession>